<protein>
    <recommendedName>
        <fullName evidence="1">Lysophospholipid transporter LplT</fullName>
    </recommendedName>
</protein>
<proteinExistence type="inferred from homology"/>
<sequence length="400" mass="41571">MSESVRTNTSIWSKGMLSVIVAQFLSAFGDNALLFATLALLKAQFYPDWSQPVLQMVFVGAYILFAPFVGQIADSFAKGRVMMVANGLKLAGAAGICLGVNPFVGYTLVGIGAAAYSPAKYGILGELTTGDKLVKANGLMEASTIAAILLGSVAGGVLADWHVIAALVACALAYAGAVAANLFIPKLVAARPGQSWRLSAMTRSFFSACVVLWRNGETRFSLVGTGLFWGAGVTLRFLLVLWVPVALGITDNATPTYLNAMVAVGIVVGAGAAAKLVTLETVSRCMPAGILIGVVVAIFSLQHALLPAYALLLLIGMLGGFFVVPLNALLQERGKKSVGAGNAIAVQNLGENSAMLLMLGLYSLAVLVGVPAVAIGIGFGVLFALAIAALWIWQRRQASY</sequence>
<gene>
    <name evidence="1" type="primary">lplT</name>
    <name type="ordered locus">SSPA2679</name>
</gene>
<accession>B5BFH5</accession>
<feature type="chain" id="PRO_1000201279" description="Lysophospholipid transporter LplT">
    <location>
        <begin position="1"/>
        <end position="400"/>
    </location>
</feature>
<feature type="transmembrane region" description="Helical" evidence="1">
    <location>
        <begin position="19"/>
        <end position="39"/>
    </location>
</feature>
<feature type="transmembrane region" description="Helical" evidence="1">
    <location>
        <begin position="53"/>
        <end position="73"/>
    </location>
</feature>
<feature type="transmembrane region" description="Helical" evidence="1">
    <location>
        <begin position="91"/>
        <end position="111"/>
    </location>
</feature>
<feature type="transmembrane region" description="Helical" evidence="1">
    <location>
        <begin position="139"/>
        <end position="159"/>
    </location>
</feature>
<feature type="transmembrane region" description="Helical" evidence="1">
    <location>
        <begin position="164"/>
        <end position="184"/>
    </location>
</feature>
<feature type="transmembrane region" description="Helical" evidence="1">
    <location>
        <begin position="195"/>
        <end position="213"/>
    </location>
</feature>
<feature type="transmembrane region" description="Helical" evidence="1">
    <location>
        <begin position="227"/>
        <end position="247"/>
    </location>
</feature>
<feature type="transmembrane region" description="Helical" evidence="1">
    <location>
        <begin position="257"/>
        <end position="277"/>
    </location>
</feature>
<feature type="transmembrane region" description="Helical" evidence="1">
    <location>
        <begin position="281"/>
        <end position="301"/>
    </location>
</feature>
<feature type="transmembrane region" description="Helical" evidence="1">
    <location>
        <begin position="304"/>
        <end position="324"/>
    </location>
</feature>
<feature type="transmembrane region" description="Helical" evidence="1">
    <location>
        <begin position="352"/>
        <end position="372"/>
    </location>
</feature>
<feature type="transmembrane region" description="Helical" evidence="1">
    <location>
        <begin position="373"/>
        <end position="393"/>
    </location>
</feature>
<comment type="function">
    <text evidence="1">Catalyzes the facilitated diffusion of 2-acyl-glycero-3-phosphoethanolamine (2-acyl-GPE) into the cell.</text>
</comment>
<comment type="subcellular location">
    <subcellularLocation>
        <location evidence="1">Cell inner membrane</location>
        <topology evidence="1">Multi-pass membrane protein</topology>
    </subcellularLocation>
</comment>
<comment type="similarity">
    <text evidence="1">Belongs to the major facilitator superfamily. LplT (TC 2.A.1.42) family.</text>
</comment>
<keyword id="KW-0997">Cell inner membrane</keyword>
<keyword id="KW-1003">Cell membrane</keyword>
<keyword id="KW-0445">Lipid transport</keyword>
<keyword id="KW-0472">Membrane</keyword>
<keyword id="KW-0812">Transmembrane</keyword>
<keyword id="KW-1133">Transmembrane helix</keyword>
<keyword id="KW-0813">Transport</keyword>
<evidence type="ECO:0000255" key="1">
    <source>
        <dbReference type="HAMAP-Rule" id="MF_01585"/>
    </source>
</evidence>
<dbReference type="EMBL" id="FM200053">
    <property type="protein sequence ID" value="CAR60920.1"/>
    <property type="molecule type" value="Genomic_DNA"/>
</dbReference>
<dbReference type="RefSeq" id="WP_000004686.1">
    <property type="nucleotide sequence ID" value="NC_011147.1"/>
</dbReference>
<dbReference type="SMR" id="B5BFH5"/>
<dbReference type="KEGG" id="sek:SSPA2679"/>
<dbReference type="HOGENOM" id="CLU_047399_0_0_6"/>
<dbReference type="Proteomes" id="UP000001869">
    <property type="component" value="Chromosome"/>
</dbReference>
<dbReference type="GO" id="GO:0005886">
    <property type="term" value="C:plasma membrane"/>
    <property type="evidence" value="ECO:0007669"/>
    <property type="project" value="UniProtKB-SubCell"/>
</dbReference>
<dbReference type="GO" id="GO:0051978">
    <property type="term" value="F:lysophospholipid:sodium symporter activity"/>
    <property type="evidence" value="ECO:0007669"/>
    <property type="project" value="InterPro"/>
</dbReference>
<dbReference type="CDD" id="cd06173">
    <property type="entry name" value="MFS_MefA_like"/>
    <property type="match status" value="1"/>
</dbReference>
<dbReference type="Gene3D" id="1.20.1250.20">
    <property type="entry name" value="MFS general substrate transporter like domains"/>
    <property type="match status" value="1"/>
</dbReference>
<dbReference type="HAMAP" id="MF_01585">
    <property type="entry name" value="MFS_LplT"/>
    <property type="match status" value="1"/>
</dbReference>
<dbReference type="InterPro" id="IPR023727">
    <property type="entry name" value="LysoPLipid__transptr_LplT"/>
</dbReference>
<dbReference type="InterPro" id="IPR011701">
    <property type="entry name" value="MFS"/>
</dbReference>
<dbReference type="InterPro" id="IPR036259">
    <property type="entry name" value="MFS_trans_sf"/>
</dbReference>
<dbReference type="NCBIfam" id="NF008397">
    <property type="entry name" value="PRK11195.1"/>
    <property type="match status" value="1"/>
</dbReference>
<dbReference type="PANTHER" id="PTHR43266">
    <property type="entry name" value="MACROLIDE-EFFLUX PROTEIN"/>
    <property type="match status" value="1"/>
</dbReference>
<dbReference type="PANTHER" id="PTHR43266:SF2">
    <property type="entry name" value="MAJOR FACILITATOR SUPERFAMILY (MFS) PROFILE DOMAIN-CONTAINING PROTEIN"/>
    <property type="match status" value="1"/>
</dbReference>
<dbReference type="Pfam" id="PF07690">
    <property type="entry name" value="MFS_1"/>
    <property type="match status" value="1"/>
</dbReference>
<dbReference type="SUPFAM" id="SSF103473">
    <property type="entry name" value="MFS general substrate transporter"/>
    <property type="match status" value="1"/>
</dbReference>
<name>LPLT_SALPK</name>
<reference key="1">
    <citation type="journal article" date="2009" name="BMC Genomics">
        <title>Pseudogene accumulation in the evolutionary histories of Salmonella enterica serovars Paratyphi A and Typhi.</title>
        <authorList>
            <person name="Holt K.E."/>
            <person name="Thomson N.R."/>
            <person name="Wain J."/>
            <person name="Langridge G.C."/>
            <person name="Hasan R."/>
            <person name="Bhutta Z.A."/>
            <person name="Quail M.A."/>
            <person name="Norbertczak H."/>
            <person name="Walker D."/>
            <person name="Simmonds M."/>
            <person name="White B."/>
            <person name="Bason N."/>
            <person name="Mungall K."/>
            <person name="Dougan G."/>
            <person name="Parkhill J."/>
        </authorList>
    </citation>
    <scope>NUCLEOTIDE SEQUENCE [LARGE SCALE GENOMIC DNA]</scope>
    <source>
        <strain>AKU_12601</strain>
    </source>
</reference>
<organism>
    <name type="scientific">Salmonella paratyphi A (strain AKU_12601)</name>
    <dbReference type="NCBI Taxonomy" id="554290"/>
    <lineage>
        <taxon>Bacteria</taxon>
        <taxon>Pseudomonadati</taxon>
        <taxon>Pseudomonadota</taxon>
        <taxon>Gammaproteobacteria</taxon>
        <taxon>Enterobacterales</taxon>
        <taxon>Enterobacteriaceae</taxon>
        <taxon>Salmonella</taxon>
    </lineage>
</organism>